<accession>Q5JSS6</accession>
<organism>
    <name type="scientific">Homo sapiens</name>
    <name type="common">Human</name>
    <dbReference type="NCBI Taxonomy" id="9606"/>
    <lineage>
        <taxon>Eukaryota</taxon>
        <taxon>Metazoa</taxon>
        <taxon>Chordata</taxon>
        <taxon>Craniata</taxon>
        <taxon>Vertebrata</taxon>
        <taxon>Euteleostomi</taxon>
        <taxon>Mammalia</taxon>
        <taxon>Eutheria</taxon>
        <taxon>Euarchontoglires</taxon>
        <taxon>Primates</taxon>
        <taxon>Haplorrhini</taxon>
        <taxon>Catarrhini</taxon>
        <taxon>Hominidae</taxon>
        <taxon>Homo</taxon>
    </lineage>
</organism>
<proteinExistence type="evidence at protein level"/>
<gene>
    <name evidence="3" type="primary">MEIG1</name>
</gene>
<evidence type="ECO:0000250" key="1">
    <source>
        <dbReference type="UniProtKB" id="Q61845"/>
    </source>
</evidence>
<evidence type="ECO:0000305" key="2"/>
<evidence type="ECO:0000312" key="3">
    <source>
        <dbReference type="HGNC" id="HGNC:23429"/>
    </source>
</evidence>
<evidence type="ECO:0007829" key="4">
    <source>
        <dbReference type="PDB" id="6NEP"/>
    </source>
</evidence>
<dbReference type="EMBL" id="AL360083">
    <property type="status" value="NOT_ANNOTATED_CDS"/>
    <property type="molecule type" value="Genomic_DNA"/>
</dbReference>
<dbReference type="CCDS" id="CCDS31151.1"/>
<dbReference type="RefSeq" id="NP_001074305.1">
    <property type="nucleotide sequence ID" value="NM_001080836.3"/>
</dbReference>
<dbReference type="RefSeq" id="XP_047281618.1">
    <property type="nucleotide sequence ID" value="XM_047425662.1"/>
</dbReference>
<dbReference type="PDB" id="6NDU">
    <property type="method" value="X-ray"/>
    <property type="resolution" value="2.10 A"/>
    <property type="chains" value="B=1-88"/>
</dbReference>
<dbReference type="PDB" id="6NEP">
    <property type="method" value="X-ray"/>
    <property type="resolution" value="2.10 A"/>
    <property type="chains" value="B=1-88"/>
</dbReference>
<dbReference type="PDB" id="6UCC">
    <property type="method" value="X-ray"/>
    <property type="resolution" value="2.60 A"/>
    <property type="chains" value="B=1-88"/>
</dbReference>
<dbReference type="PDBsum" id="6NDU"/>
<dbReference type="PDBsum" id="6NEP"/>
<dbReference type="PDBsum" id="6UCC"/>
<dbReference type="SMR" id="Q5JSS6"/>
<dbReference type="BioGRID" id="569980">
    <property type="interactions" value="3"/>
</dbReference>
<dbReference type="CORUM" id="Q5JSS6"/>
<dbReference type="FunCoup" id="Q5JSS6">
    <property type="interactions" value="822"/>
</dbReference>
<dbReference type="IntAct" id="Q5JSS6">
    <property type="interactions" value="1"/>
</dbReference>
<dbReference type="STRING" id="9606.ENSP00000384334"/>
<dbReference type="GlyGen" id="Q5JSS6">
    <property type="glycosylation" value="1 site, 1 O-linked glycan (1 site)"/>
</dbReference>
<dbReference type="iPTMnet" id="Q5JSS6"/>
<dbReference type="PhosphoSitePlus" id="Q5JSS6"/>
<dbReference type="BioMuta" id="MEIG1"/>
<dbReference type="MassIVE" id="Q5JSS6"/>
<dbReference type="PaxDb" id="9606-ENSP00000384334"/>
<dbReference type="PeptideAtlas" id="Q5JSS6"/>
<dbReference type="Antibodypedia" id="51531">
    <property type="antibodies" value="79 antibodies from 18 providers"/>
</dbReference>
<dbReference type="DNASU" id="644890"/>
<dbReference type="Ensembl" id="ENST00000378240.1">
    <property type="protein sequence ID" value="ENSP00000367486.1"/>
    <property type="gene ID" value="ENSG00000197889.10"/>
</dbReference>
<dbReference type="Ensembl" id="ENST00000407572.6">
    <property type="protein sequence ID" value="ENSP00000384334.1"/>
    <property type="gene ID" value="ENSG00000197889.10"/>
</dbReference>
<dbReference type="GeneID" id="644890"/>
<dbReference type="KEGG" id="hsa:644890"/>
<dbReference type="MANE-Select" id="ENST00000407572.6">
    <property type="protein sequence ID" value="ENSP00000384334.1"/>
    <property type="RefSeq nucleotide sequence ID" value="NM_001080836.3"/>
    <property type="RefSeq protein sequence ID" value="NP_001074305.1"/>
</dbReference>
<dbReference type="UCSC" id="uc009xjk.1">
    <property type="organism name" value="human"/>
</dbReference>
<dbReference type="AGR" id="HGNC:23429"/>
<dbReference type="CTD" id="644890"/>
<dbReference type="GeneCards" id="MEIG1"/>
<dbReference type="HGNC" id="HGNC:23429">
    <property type="gene designation" value="MEIG1"/>
</dbReference>
<dbReference type="HPA" id="ENSG00000197889">
    <property type="expression patterns" value="Group enriched (fallopian tube, testis)"/>
</dbReference>
<dbReference type="MalaCards" id="MEIG1"/>
<dbReference type="MIM" id="614174">
    <property type="type" value="gene"/>
</dbReference>
<dbReference type="neXtProt" id="NX_Q5JSS6"/>
<dbReference type="OpenTargets" id="ENSG00000197889"/>
<dbReference type="PharmGKB" id="PA134895701"/>
<dbReference type="VEuPathDB" id="HostDB:ENSG00000197889"/>
<dbReference type="eggNOG" id="ENOG502S7BQ">
    <property type="taxonomic scope" value="Eukaryota"/>
</dbReference>
<dbReference type="GeneTree" id="ENSGT00390000013550"/>
<dbReference type="HOGENOM" id="CLU_160103_0_0_1"/>
<dbReference type="InParanoid" id="Q5JSS6"/>
<dbReference type="OMA" id="KQVSMID"/>
<dbReference type="OrthoDB" id="10023051at2759"/>
<dbReference type="PAN-GO" id="Q5JSS6">
    <property type="GO annotations" value="1 GO annotation based on evolutionary models"/>
</dbReference>
<dbReference type="PhylomeDB" id="Q5JSS6"/>
<dbReference type="TreeFam" id="TF329080"/>
<dbReference type="PathwayCommons" id="Q5JSS6"/>
<dbReference type="SignaLink" id="Q5JSS6"/>
<dbReference type="BioGRID-ORCS" id="644890">
    <property type="hits" value="15 hits in 1050 CRISPR screens"/>
</dbReference>
<dbReference type="GenomeRNAi" id="644890"/>
<dbReference type="Pharos" id="Q5JSS6">
    <property type="development level" value="Tdark"/>
</dbReference>
<dbReference type="PRO" id="PR:Q5JSS6"/>
<dbReference type="Proteomes" id="UP000005640">
    <property type="component" value="Chromosome 10"/>
</dbReference>
<dbReference type="RNAct" id="Q5JSS6">
    <property type="molecule type" value="protein"/>
</dbReference>
<dbReference type="Bgee" id="ENSG00000197889">
    <property type="expression patterns" value="Expressed in male germ line stem cell (sensu Vertebrata) in testis and 98 other cell types or tissues"/>
</dbReference>
<dbReference type="GO" id="GO:0005829">
    <property type="term" value="C:cytosol"/>
    <property type="evidence" value="ECO:0007669"/>
    <property type="project" value="Ensembl"/>
</dbReference>
<dbReference type="GO" id="GO:0002177">
    <property type="term" value="C:manchette"/>
    <property type="evidence" value="ECO:0007669"/>
    <property type="project" value="Ensembl"/>
</dbReference>
<dbReference type="GO" id="GO:0005634">
    <property type="term" value="C:nucleus"/>
    <property type="evidence" value="ECO:0000318"/>
    <property type="project" value="GO_Central"/>
</dbReference>
<dbReference type="GO" id="GO:1905198">
    <property type="term" value="P:manchette assembly"/>
    <property type="evidence" value="ECO:0007669"/>
    <property type="project" value="Ensembl"/>
</dbReference>
<dbReference type="GO" id="GO:0008104">
    <property type="term" value="P:protein localization"/>
    <property type="evidence" value="ECO:0007669"/>
    <property type="project" value="Ensembl"/>
</dbReference>
<dbReference type="GO" id="GO:0007288">
    <property type="term" value="P:sperm axoneme assembly"/>
    <property type="evidence" value="ECO:0007669"/>
    <property type="project" value="Ensembl"/>
</dbReference>
<dbReference type="InterPro" id="IPR020186">
    <property type="entry name" value="Meiosis-expressed_gene_1"/>
</dbReference>
<dbReference type="PANTHER" id="PTHR17008:SF1">
    <property type="entry name" value="MEIOSIS EXPRESSED GENE 1 PROTEIN HOMOLOG"/>
    <property type="match status" value="1"/>
</dbReference>
<dbReference type="PANTHER" id="PTHR17008">
    <property type="entry name" value="MEIOSIS-EXPRESSED GENE 1 PROTEIN"/>
    <property type="match status" value="1"/>
</dbReference>
<dbReference type="Pfam" id="PF15163">
    <property type="entry name" value="Meiosis_expr"/>
    <property type="match status" value="1"/>
</dbReference>
<feature type="chain" id="PRO_0000313025" description="Meiosis expressed gene 1 protein homolog">
    <location>
        <begin position="1"/>
        <end position="88"/>
    </location>
</feature>
<feature type="sequence variant" id="VAR_053979" description="In dbSNP:rs4750568.">
    <original>K</original>
    <variation>T</variation>
    <location>
        <position position="9"/>
    </location>
</feature>
<feature type="strand" evidence="4">
    <location>
        <begin position="9"/>
        <end position="13"/>
    </location>
</feature>
<feature type="helix" evidence="4">
    <location>
        <begin position="19"/>
        <end position="29"/>
    </location>
</feature>
<feature type="helix" evidence="4">
    <location>
        <begin position="35"/>
        <end position="41"/>
    </location>
</feature>
<feature type="turn" evidence="4">
    <location>
        <begin position="51"/>
        <end position="53"/>
    </location>
</feature>
<feature type="strand" evidence="4">
    <location>
        <begin position="58"/>
        <end position="60"/>
    </location>
</feature>
<feature type="strand" evidence="4">
    <location>
        <begin position="66"/>
        <end position="68"/>
    </location>
</feature>
<feature type="helix" evidence="4">
    <location>
        <begin position="77"/>
        <end position="80"/>
    </location>
</feature>
<feature type="strand" evidence="4">
    <location>
        <begin position="84"/>
        <end position="87"/>
    </location>
</feature>
<reference key="1">
    <citation type="journal article" date="2004" name="Nature">
        <title>The DNA sequence and comparative analysis of human chromosome 10.</title>
        <authorList>
            <person name="Deloukas P."/>
            <person name="Earthrowl M.E."/>
            <person name="Grafham D.V."/>
            <person name="Rubenfield M."/>
            <person name="French L."/>
            <person name="Steward C.A."/>
            <person name="Sims S.K."/>
            <person name="Jones M.C."/>
            <person name="Searle S."/>
            <person name="Scott C."/>
            <person name="Howe K."/>
            <person name="Hunt S.E."/>
            <person name="Andrews T.D."/>
            <person name="Gilbert J.G.R."/>
            <person name="Swarbreck D."/>
            <person name="Ashurst J.L."/>
            <person name="Taylor A."/>
            <person name="Battles J."/>
            <person name="Bird C.P."/>
            <person name="Ainscough R."/>
            <person name="Almeida J.P."/>
            <person name="Ashwell R.I.S."/>
            <person name="Ambrose K.D."/>
            <person name="Babbage A.K."/>
            <person name="Bagguley C.L."/>
            <person name="Bailey J."/>
            <person name="Banerjee R."/>
            <person name="Bates K."/>
            <person name="Beasley H."/>
            <person name="Bray-Allen S."/>
            <person name="Brown A.J."/>
            <person name="Brown J.Y."/>
            <person name="Burford D.C."/>
            <person name="Burrill W."/>
            <person name="Burton J."/>
            <person name="Cahill P."/>
            <person name="Camire D."/>
            <person name="Carter N.P."/>
            <person name="Chapman J.C."/>
            <person name="Clark S.Y."/>
            <person name="Clarke G."/>
            <person name="Clee C.M."/>
            <person name="Clegg S."/>
            <person name="Corby N."/>
            <person name="Coulson A."/>
            <person name="Dhami P."/>
            <person name="Dutta I."/>
            <person name="Dunn M."/>
            <person name="Faulkner L."/>
            <person name="Frankish A."/>
            <person name="Frankland J.A."/>
            <person name="Garner P."/>
            <person name="Garnett J."/>
            <person name="Gribble S."/>
            <person name="Griffiths C."/>
            <person name="Grocock R."/>
            <person name="Gustafson E."/>
            <person name="Hammond S."/>
            <person name="Harley J.L."/>
            <person name="Hart E."/>
            <person name="Heath P.D."/>
            <person name="Ho T.P."/>
            <person name="Hopkins B."/>
            <person name="Horne J."/>
            <person name="Howden P.J."/>
            <person name="Huckle E."/>
            <person name="Hynds C."/>
            <person name="Johnson C."/>
            <person name="Johnson D."/>
            <person name="Kana A."/>
            <person name="Kay M."/>
            <person name="Kimberley A.M."/>
            <person name="Kershaw J.K."/>
            <person name="Kokkinaki M."/>
            <person name="Laird G.K."/>
            <person name="Lawlor S."/>
            <person name="Lee H.M."/>
            <person name="Leongamornlert D.A."/>
            <person name="Laird G."/>
            <person name="Lloyd C."/>
            <person name="Lloyd D.M."/>
            <person name="Loveland J."/>
            <person name="Lovell J."/>
            <person name="McLaren S."/>
            <person name="McLay K.E."/>
            <person name="McMurray A."/>
            <person name="Mashreghi-Mohammadi M."/>
            <person name="Matthews L."/>
            <person name="Milne S."/>
            <person name="Nickerson T."/>
            <person name="Nguyen M."/>
            <person name="Overton-Larty E."/>
            <person name="Palmer S.A."/>
            <person name="Pearce A.V."/>
            <person name="Peck A.I."/>
            <person name="Pelan S."/>
            <person name="Phillimore B."/>
            <person name="Porter K."/>
            <person name="Rice C.M."/>
            <person name="Rogosin A."/>
            <person name="Ross M.T."/>
            <person name="Sarafidou T."/>
            <person name="Sehra H.K."/>
            <person name="Shownkeen R."/>
            <person name="Skuce C.D."/>
            <person name="Smith M."/>
            <person name="Standring L."/>
            <person name="Sycamore N."/>
            <person name="Tester J."/>
            <person name="Thorpe A."/>
            <person name="Torcasso W."/>
            <person name="Tracey A."/>
            <person name="Tromans A."/>
            <person name="Tsolas J."/>
            <person name="Wall M."/>
            <person name="Walsh J."/>
            <person name="Wang H."/>
            <person name="Weinstock K."/>
            <person name="West A.P."/>
            <person name="Willey D.L."/>
            <person name="Whitehead S.L."/>
            <person name="Wilming L."/>
            <person name="Wray P.W."/>
            <person name="Young L."/>
            <person name="Chen Y."/>
            <person name="Lovering R.C."/>
            <person name="Moschonas N.K."/>
            <person name="Siebert R."/>
            <person name="Fechtel K."/>
            <person name="Bentley D."/>
            <person name="Durbin R.M."/>
            <person name="Hubbard T."/>
            <person name="Doucette-Stamm L."/>
            <person name="Beck S."/>
            <person name="Smith D.R."/>
            <person name="Rogers J."/>
        </authorList>
    </citation>
    <scope>NUCLEOTIDE SEQUENCE [LARGE SCALE GENOMIC DNA]</scope>
</reference>
<name>MEIG1_HUMAN</name>
<protein>
    <recommendedName>
        <fullName>Meiosis expressed gene 1 protein homolog</fullName>
    </recommendedName>
</protein>
<keyword id="KW-0002">3D-structure</keyword>
<keyword id="KW-0221">Differentiation</keyword>
<keyword id="KW-1185">Reference proteome</keyword>
<keyword id="KW-0744">Spermatogenesis</keyword>
<sequence length="88" mass="10795">MASSDVKPKSVSHAKKWSEEIENLYRFQQAGYRDETEYRQVKQVSMVDRWPETGYVKKLQRRDNTFYYYNKQRECDDKEVHKVKIYAY</sequence>
<comment type="function">
    <text evidence="1">Essential for spermiogenesis.</text>
</comment>
<comment type="subunit">
    <text evidence="1">Interacts with PACRG. Interacts with MORN3.</text>
</comment>
<comment type="interaction">
    <interactant intactId="EBI-18583441">
        <id>Q5JSS6</id>
    </interactant>
    <interactant intactId="EBI-11945452">
        <id>Q96M98-2</id>
        <label>PACRG</label>
    </interactant>
    <organismsDiffer>false</organismsDiffer>
    <experiments>5</experiments>
</comment>
<comment type="similarity">
    <text evidence="2">Belongs to the MEIG1 family.</text>
</comment>